<keyword id="KW-0044">Antibiotic</keyword>
<keyword id="KW-0929">Antimicrobial</keyword>
<keyword id="KW-0053">Apoptosis</keyword>
<keyword id="KW-0204">Cytolysis</keyword>
<keyword id="KW-0903">Direct protein sequencing</keyword>
<keyword id="KW-1015">Disulfide bond</keyword>
<keyword id="KW-0274">FAD</keyword>
<keyword id="KW-0285">Flavoprotein</keyword>
<keyword id="KW-0325">Glycoprotein</keyword>
<keyword id="KW-0354">Hemolysis</keyword>
<keyword id="KW-1199">Hemostasis impairing toxin</keyword>
<keyword id="KW-0560">Oxidoreductase</keyword>
<keyword id="KW-1202">Platelet aggregation activating toxin</keyword>
<keyword id="KW-0964">Secreted</keyword>
<keyword id="KW-0732">Signal</keyword>
<keyword id="KW-0800">Toxin</keyword>
<reference key="1">
    <citation type="journal article" date="2009" name="Biochimie">
        <title>Structural and functional properties of Bp-LAAO, a new L-amino acid oxidase isolated from Bothrops pauloensis snake venom.</title>
        <authorList>
            <person name="Rodrigues R.S."/>
            <person name="da Silva J.F."/>
            <person name="Boldrini Franca J."/>
            <person name="Fonseca F.P."/>
            <person name="Otaviano A.R."/>
            <person name="Henrique Silva F."/>
            <person name="Hamaguchi A."/>
            <person name="Magro A.J."/>
            <person name="Braz A.S."/>
            <person name="dos Santos J.I."/>
            <person name="Homsi-Brandeburgo M.I."/>
            <person name="Fontes M.R."/>
            <person name="Fuly A.L."/>
            <person name="Soares A.M."/>
            <person name="Rodrigues V.M."/>
        </authorList>
    </citation>
    <scope>NUCLEOTIDE SEQUENCE [MRNA]</scope>
    <scope>PROTEIN SEQUENCE OF 19-68</scope>
    <scope>FUNCTION</scope>
    <scope>CATALYTIC ACTIVITY</scope>
    <scope>SUBUNIT</scope>
    <scope>GLYCOSYLATION</scope>
    <scope>SUBCELLULAR LOCATION</scope>
    <scope>SUBSTRATE SPECIFICITY</scope>
    <source>
        <tissue>Venom</tissue>
        <tissue>Venom gland</tissue>
    </source>
</reference>
<reference key="2">
    <citation type="journal article" date="2012" name="J. Proteomics">
        <title>Combined snake venomics and venom gland transcriptomic analysis of Bothropoides pauloensis.</title>
        <authorList>
            <person name="Rodrigues R.S."/>
            <person name="Boldrini-Franca J."/>
            <person name="Fonseca F.P."/>
            <person name="de la Torre P."/>
            <person name="Henrique-Silva F."/>
            <person name="Sanz L."/>
            <person name="Calvete J.J."/>
            <person name="Rodrigues V.M."/>
        </authorList>
    </citation>
    <scope>PROTEIN SEQUENCE OF 19-34</scope>
    <scope>IDENTIFICATION BY MASS SPECTROMETRY</scope>
    <source>
        <tissue>Venom</tissue>
    </source>
</reference>
<evidence type="ECO:0000250" key="1">
    <source>
        <dbReference type="UniProtKB" id="P0CC17"/>
    </source>
</evidence>
<evidence type="ECO:0000250" key="2">
    <source>
        <dbReference type="UniProtKB" id="P81382"/>
    </source>
</evidence>
<evidence type="ECO:0000255" key="3"/>
<evidence type="ECO:0000269" key="4">
    <source>
    </source>
</evidence>
<evidence type="ECO:0000269" key="5">
    <source>
    </source>
</evidence>
<evidence type="ECO:0000303" key="6">
    <source>
    </source>
</evidence>
<evidence type="ECO:0000305" key="7"/>
<evidence type="ECO:0000305" key="8">
    <source>
    </source>
</evidence>
<protein>
    <recommendedName>
        <fullName>L-amino-acid oxidase</fullName>
        <shortName evidence="6">Bp-LAAO</shortName>
        <shortName>LAO</shortName>
        <ecNumber evidence="4">1.4.3.2</ecNumber>
    </recommendedName>
</protein>
<name>OXLA_BOTPA</name>
<organism>
    <name type="scientific">Bothrops pauloensis</name>
    <name type="common">Neuwied's lancehead</name>
    <name type="synonym">Bothrops neuwiedi pauloensis</name>
    <dbReference type="NCBI Taxonomy" id="1042543"/>
    <lineage>
        <taxon>Eukaryota</taxon>
        <taxon>Metazoa</taxon>
        <taxon>Chordata</taxon>
        <taxon>Craniata</taxon>
        <taxon>Vertebrata</taxon>
        <taxon>Euteleostomi</taxon>
        <taxon>Lepidosauria</taxon>
        <taxon>Squamata</taxon>
        <taxon>Bifurcata</taxon>
        <taxon>Unidentata</taxon>
        <taxon>Episquamata</taxon>
        <taxon>Toxicofera</taxon>
        <taxon>Serpentes</taxon>
        <taxon>Colubroidea</taxon>
        <taxon>Viperidae</taxon>
        <taxon>Crotalinae</taxon>
        <taxon>Bothrops</taxon>
    </lineage>
</organism>
<feature type="signal peptide" evidence="4 5">
    <location>
        <begin position="1"/>
        <end position="18"/>
    </location>
</feature>
<feature type="chain" id="PRO_0000412598" description="L-amino-acid oxidase">
    <location>
        <begin position="19"/>
        <end position="503" status="greater than"/>
    </location>
</feature>
<feature type="binding site" evidence="2">
    <location>
        <begin position="61"/>
        <end position="62"/>
    </location>
    <ligand>
        <name>FAD</name>
        <dbReference type="ChEBI" id="CHEBI:57692"/>
    </ligand>
</feature>
<feature type="binding site" evidence="2">
    <location>
        <begin position="81"/>
        <end position="82"/>
    </location>
    <ligand>
        <name>FAD</name>
        <dbReference type="ChEBI" id="CHEBI:57692"/>
    </ligand>
</feature>
<feature type="binding site" evidence="2">
    <location>
        <position position="89"/>
    </location>
    <ligand>
        <name>FAD</name>
        <dbReference type="ChEBI" id="CHEBI:57692"/>
    </ligand>
</feature>
<feature type="binding site" evidence="2">
    <location>
        <begin position="105"/>
        <end position="108"/>
    </location>
    <ligand>
        <name>FAD</name>
        <dbReference type="ChEBI" id="CHEBI:57692"/>
    </ligand>
</feature>
<feature type="binding site" evidence="2">
    <location>
        <position position="108"/>
    </location>
    <ligand>
        <name>substrate</name>
    </ligand>
</feature>
<feature type="binding site" evidence="2">
    <location>
        <position position="241"/>
    </location>
    <ligand>
        <name>substrate</name>
    </ligand>
</feature>
<feature type="binding site" evidence="2">
    <location>
        <position position="279"/>
    </location>
    <ligand>
        <name>FAD</name>
        <dbReference type="ChEBI" id="CHEBI:57692"/>
    </ligand>
</feature>
<feature type="binding site" evidence="2">
    <location>
        <position position="390"/>
    </location>
    <ligand>
        <name>substrate</name>
    </ligand>
</feature>
<feature type="binding site" evidence="2">
    <location>
        <position position="475"/>
    </location>
    <ligand>
        <name>FAD</name>
        <dbReference type="ChEBI" id="CHEBI:57692"/>
    </ligand>
</feature>
<feature type="binding site" evidence="2">
    <location>
        <begin position="482"/>
        <end position="487"/>
    </location>
    <ligand>
        <name>FAD</name>
        <dbReference type="ChEBI" id="CHEBI:57692"/>
    </ligand>
</feature>
<feature type="binding site" evidence="2">
    <location>
        <begin position="482"/>
        <end position="483"/>
    </location>
    <ligand>
        <name>substrate</name>
    </ligand>
</feature>
<feature type="glycosylation site" description="N-linked (GlcNAc...) asparagine" evidence="3">
    <location>
        <position position="190"/>
    </location>
</feature>
<feature type="disulfide bond" evidence="2">
    <location>
        <begin position="28"/>
        <end position="191"/>
    </location>
</feature>
<feature type="disulfide bond" evidence="2">
    <location>
        <begin position="349"/>
        <end position="430"/>
    </location>
</feature>
<feature type="non-terminal residue" evidence="6">
    <location>
        <position position="503"/>
    </location>
</feature>
<sequence length="503" mass="56799">MNVFFMFSLLFLAALGSCADDGNPLEECFRETDYEEFLEIAKNGLSATSNPKHVVIVGAGMSGLSAAYVLANAGHQVTVLEASKRAGGRVRTYRNDKEGWYANLGPMRLPEKHRIVREYIRKFGLQLNEFSQENENAWYFIKNIRKRVGEVNKDPGVLEYPVKPSEVGKSAGQLYEESLQKAVEELRRTNCSYMLNKYDTYSTKEYLLKEGNLSPGAVDMIGDLLNEDSGYYVSFIESLKHDDIFAYEKRFDEIVGGMDKLPTSMYQAIQEKVRLNVRVIKIQQDVKEVTVTYQTSAKETLSVTADYVIVCTTSRAARRIKFEPPLPPKKAHALRSVHYRSGTKIFLTCTKKFWEDDGIHGGKSTTDLPSRFIYYPNHNFPSGVGVIIAYGIGDDANFFQALDFKDCGDIVINDLSLIHQLPKEEIQAFCRPSMIQRWSLDKYAMGGITTFTPYQFQHFSEALTAPVDRIYFAGEYTAQAHGWIDSTIKSGLTAARDVNRASE</sequence>
<comment type="function">
    <text evidence="1 4">Catalyzes an oxidative deamination of predominantly hydrophobic and aromatic L-amino acids, thus producing hydrogen peroxide that may contribute to the diverse toxic effects of this enzyme (PubMed:19135502). Is highly active on L-Met, L-Leu, L-Phe and L-Ile (PubMed:19135502). Exhibits diverse biological activities, such as antibacterial on both Gram-positive and Gram-negative bacteria and antiparasitic activities, as well as induction of platelet aggregation (PubMed:19135502). Effects of snake L-amino oxidases on platelets are controversial, since they either induce aggregation or inhibit agonist-induced aggregation. These different effects are probably due to different experimental conditions. This protein may also have activities in hemorrhage, hemolysis, edema, and apoptosis.</text>
</comment>
<comment type="catalytic activity">
    <reaction evidence="4">
        <text>an L-alpha-amino acid + O2 + H2O = a 2-oxocarboxylate + H2O2 + NH4(+)</text>
        <dbReference type="Rhea" id="RHEA:13781"/>
        <dbReference type="ChEBI" id="CHEBI:15377"/>
        <dbReference type="ChEBI" id="CHEBI:15379"/>
        <dbReference type="ChEBI" id="CHEBI:16240"/>
        <dbReference type="ChEBI" id="CHEBI:28938"/>
        <dbReference type="ChEBI" id="CHEBI:35179"/>
        <dbReference type="ChEBI" id="CHEBI:59869"/>
        <dbReference type="EC" id="1.4.3.2"/>
    </reaction>
</comment>
<comment type="catalytic activity">
    <reaction evidence="4">
        <text>L-leucine + O2 + H2O = 4-methyl-2-oxopentanoate + H2O2 + NH4(+)</text>
        <dbReference type="Rhea" id="RHEA:60996"/>
        <dbReference type="ChEBI" id="CHEBI:15377"/>
        <dbReference type="ChEBI" id="CHEBI:15379"/>
        <dbReference type="ChEBI" id="CHEBI:16240"/>
        <dbReference type="ChEBI" id="CHEBI:17865"/>
        <dbReference type="ChEBI" id="CHEBI:28938"/>
        <dbReference type="ChEBI" id="CHEBI:57427"/>
    </reaction>
</comment>
<comment type="catalytic activity">
    <reaction evidence="4">
        <text>L-phenylalanine + O2 + H2O = 3-phenylpyruvate + H2O2 + NH4(+)</text>
        <dbReference type="Rhea" id="RHEA:61240"/>
        <dbReference type="ChEBI" id="CHEBI:15377"/>
        <dbReference type="ChEBI" id="CHEBI:15379"/>
        <dbReference type="ChEBI" id="CHEBI:16240"/>
        <dbReference type="ChEBI" id="CHEBI:18005"/>
        <dbReference type="ChEBI" id="CHEBI:28938"/>
        <dbReference type="ChEBI" id="CHEBI:58095"/>
    </reaction>
</comment>
<comment type="catalytic activity">
    <reaction evidence="4">
        <text>L-methionine + O2 + H2O = 4-methylsulfanyl-2-oxobutanoate + H2O2 + NH4(+)</text>
        <dbReference type="Rhea" id="RHEA:61236"/>
        <dbReference type="ChEBI" id="CHEBI:15377"/>
        <dbReference type="ChEBI" id="CHEBI:15379"/>
        <dbReference type="ChEBI" id="CHEBI:16240"/>
        <dbReference type="ChEBI" id="CHEBI:16723"/>
        <dbReference type="ChEBI" id="CHEBI:28938"/>
        <dbReference type="ChEBI" id="CHEBI:57844"/>
    </reaction>
</comment>
<comment type="catalytic activity">
    <reaction evidence="4">
        <text>L-isoleucine + O2 + H2O = (S)-3-methyl-2-oxopentanoate + H2O2 + NH4(+)</text>
        <dbReference type="Rhea" id="RHEA:61232"/>
        <dbReference type="ChEBI" id="CHEBI:15377"/>
        <dbReference type="ChEBI" id="CHEBI:15379"/>
        <dbReference type="ChEBI" id="CHEBI:16240"/>
        <dbReference type="ChEBI" id="CHEBI:28938"/>
        <dbReference type="ChEBI" id="CHEBI:35146"/>
        <dbReference type="ChEBI" id="CHEBI:58045"/>
    </reaction>
</comment>
<comment type="cofactor">
    <cofactor evidence="2">
        <name>FAD</name>
        <dbReference type="ChEBI" id="CHEBI:57692"/>
    </cofactor>
</comment>
<comment type="subunit">
    <text evidence="4">Homodimer; non-covalently linked.</text>
</comment>
<comment type="subcellular location">
    <subcellularLocation>
        <location evidence="4">Secreted</location>
    </subcellularLocation>
</comment>
<comment type="tissue specificity">
    <text evidence="8">Expressed by the venom gland.</text>
</comment>
<comment type="PTM">
    <text evidence="4 7">N-glycosylated (Probable). The enzymatic activity is not affected by deglycosylation.</text>
</comment>
<comment type="miscellaneous">
    <text evidence="8">Has parasiticidal activities against leishmania, as a result of enzyme-catalyzed hydrogen peroxide production.</text>
</comment>
<comment type="similarity">
    <text evidence="7">Belongs to the flavin monoamine oxidase family. FIG1 subfamily.</text>
</comment>
<dbReference type="EC" id="1.4.3.2" evidence="4"/>
<dbReference type="EMBL" id="EU870608">
    <property type="protein sequence ID" value="ACG55578.1"/>
    <property type="molecule type" value="mRNA"/>
</dbReference>
<dbReference type="SMR" id="B5AR80"/>
<dbReference type="BRENDA" id="1.4.3.2">
    <property type="organism ID" value="10579"/>
</dbReference>
<dbReference type="GO" id="GO:0005576">
    <property type="term" value="C:extracellular region"/>
    <property type="evidence" value="ECO:0007669"/>
    <property type="project" value="UniProtKB-SubCell"/>
</dbReference>
<dbReference type="GO" id="GO:0106329">
    <property type="term" value="F:L-phenylalaine oxidase activity"/>
    <property type="evidence" value="ECO:0007669"/>
    <property type="project" value="RHEA"/>
</dbReference>
<dbReference type="GO" id="GO:0090729">
    <property type="term" value="F:toxin activity"/>
    <property type="evidence" value="ECO:0007669"/>
    <property type="project" value="UniProtKB-KW"/>
</dbReference>
<dbReference type="GO" id="GO:0009063">
    <property type="term" value="P:amino acid catabolic process"/>
    <property type="evidence" value="ECO:0007669"/>
    <property type="project" value="TreeGrafter"/>
</dbReference>
<dbReference type="GO" id="GO:0006915">
    <property type="term" value="P:apoptotic process"/>
    <property type="evidence" value="ECO:0007669"/>
    <property type="project" value="UniProtKB-KW"/>
</dbReference>
<dbReference type="GO" id="GO:0042742">
    <property type="term" value="P:defense response to bacterium"/>
    <property type="evidence" value="ECO:0007669"/>
    <property type="project" value="UniProtKB-KW"/>
</dbReference>
<dbReference type="GO" id="GO:0031640">
    <property type="term" value="P:killing of cells of another organism"/>
    <property type="evidence" value="ECO:0007669"/>
    <property type="project" value="UniProtKB-KW"/>
</dbReference>
<dbReference type="FunFam" id="1.10.405.10:FF:000004">
    <property type="entry name" value="Amine oxidase"/>
    <property type="match status" value="1"/>
</dbReference>
<dbReference type="FunFam" id="3.50.50.60:FF:000450">
    <property type="entry name" value="Amine oxidase"/>
    <property type="match status" value="1"/>
</dbReference>
<dbReference type="Gene3D" id="3.90.660.10">
    <property type="match status" value="1"/>
</dbReference>
<dbReference type="Gene3D" id="3.50.50.60">
    <property type="entry name" value="FAD/NAD(P)-binding domain"/>
    <property type="match status" value="1"/>
</dbReference>
<dbReference type="Gene3D" id="1.10.405.10">
    <property type="entry name" value="Guanine Nucleotide Dissociation Inhibitor, domain 1"/>
    <property type="match status" value="1"/>
</dbReference>
<dbReference type="InterPro" id="IPR002937">
    <property type="entry name" value="Amino_oxidase"/>
</dbReference>
<dbReference type="InterPro" id="IPR036188">
    <property type="entry name" value="FAD/NAD-bd_sf"/>
</dbReference>
<dbReference type="InterPro" id="IPR001613">
    <property type="entry name" value="Flavin_amine_oxidase"/>
</dbReference>
<dbReference type="InterPro" id="IPR050281">
    <property type="entry name" value="Flavin_monoamine_oxidase"/>
</dbReference>
<dbReference type="PANTHER" id="PTHR10742:SF355">
    <property type="entry name" value="AMINE OXIDASE"/>
    <property type="match status" value="1"/>
</dbReference>
<dbReference type="PANTHER" id="PTHR10742">
    <property type="entry name" value="FLAVIN MONOAMINE OXIDASE"/>
    <property type="match status" value="1"/>
</dbReference>
<dbReference type="Pfam" id="PF01593">
    <property type="entry name" value="Amino_oxidase"/>
    <property type="match status" value="1"/>
</dbReference>
<dbReference type="PRINTS" id="PR00757">
    <property type="entry name" value="AMINEOXDASEF"/>
</dbReference>
<dbReference type="SUPFAM" id="SSF54373">
    <property type="entry name" value="FAD-linked reductases, C-terminal domain"/>
    <property type="match status" value="1"/>
</dbReference>
<dbReference type="SUPFAM" id="SSF51905">
    <property type="entry name" value="FAD/NAD(P)-binding domain"/>
    <property type="match status" value="1"/>
</dbReference>
<proteinExistence type="evidence at protein level"/>
<accession>B5AR80</accession>